<reference key="1">
    <citation type="journal article" date="2005" name="Nat. Biotechnol.">
        <title>Complete genome sequence of the plant commensal Pseudomonas fluorescens Pf-5.</title>
        <authorList>
            <person name="Paulsen I.T."/>
            <person name="Press C.M."/>
            <person name="Ravel J."/>
            <person name="Kobayashi D.Y."/>
            <person name="Myers G.S.A."/>
            <person name="Mavrodi D.V."/>
            <person name="DeBoy R.T."/>
            <person name="Seshadri R."/>
            <person name="Ren Q."/>
            <person name="Madupu R."/>
            <person name="Dodson R.J."/>
            <person name="Durkin A.S."/>
            <person name="Brinkac L.M."/>
            <person name="Daugherty S.C."/>
            <person name="Sullivan S.A."/>
            <person name="Rosovitz M.J."/>
            <person name="Gwinn M.L."/>
            <person name="Zhou L."/>
            <person name="Schneider D.J."/>
            <person name="Cartinhour S.W."/>
            <person name="Nelson W.C."/>
            <person name="Weidman J."/>
            <person name="Watkins K."/>
            <person name="Tran K."/>
            <person name="Khouri H."/>
            <person name="Pierson E.A."/>
            <person name="Pierson L.S. III"/>
            <person name="Thomashow L.S."/>
            <person name="Loper J.E."/>
        </authorList>
    </citation>
    <scope>NUCLEOTIDE SEQUENCE [LARGE SCALE GENOMIC DNA]</scope>
    <source>
        <strain>ATCC BAA-477 / NRRL B-23932 / Pf-5</strain>
    </source>
</reference>
<gene>
    <name evidence="1" type="primary">dnaJ</name>
    <name type="ordered locus">PFL_0828</name>
</gene>
<feature type="chain" id="PRO_1000085251" description="Chaperone protein DnaJ">
    <location>
        <begin position="1"/>
        <end position="374"/>
    </location>
</feature>
<feature type="domain" description="J" evidence="1">
    <location>
        <begin position="5"/>
        <end position="70"/>
    </location>
</feature>
<feature type="repeat" description="CXXCXGXG motif">
    <location>
        <begin position="146"/>
        <end position="153"/>
    </location>
</feature>
<feature type="repeat" description="CXXCXGXG motif">
    <location>
        <begin position="163"/>
        <end position="170"/>
    </location>
</feature>
<feature type="repeat" description="CXXCXGXG motif">
    <location>
        <begin position="185"/>
        <end position="192"/>
    </location>
</feature>
<feature type="repeat" description="CXXCXGXG motif">
    <location>
        <begin position="199"/>
        <end position="206"/>
    </location>
</feature>
<feature type="zinc finger region" description="CR-type" evidence="1">
    <location>
        <begin position="133"/>
        <end position="211"/>
    </location>
</feature>
<feature type="binding site" evidence="1">
    <location>
        <position position="146"/>
    </location>
    <ligand>
        <name>Zn(2+)</name>
        <dbReference type="ChEBI" id="CHEBI:29105"/>
        <label>1</label>
    </ligand>
</feature>
<feature type="binding site" evidence="1">
    <location>
        <position position="149"/>
    </location>
    <ligand>
        <name>Zn(2+)</name>
        <dbReference type="ChEBI" id="CHEBI:29105"/>
        <label>1</label>
    </ligand>
</feature>
<feature type="binding site" evidence="1">
    <location>
        <position position="163"/>
    </location>
    <ligand>
        <name>Zn(2+)</name>
        <dbReference type="ChEBI" id="CHEBI:29105"/>
        <label>2</label>
    </ligand>
</feature>
<feature type="binding site" evidence="1">
    <location>
        <position position="166"/>
    </location>
    <ligand>
        <name>Zn(2+)</name>
        <dbReference type="ChEBI" id="CHEBI:29105"/>
        <label>2</label>
    </ligand>
</feature>
<feature type="binding site" evidence="1">
    <location>
        <position position="185"/>
    </location>
    <ligand>
        <name>Zn(2+)</name>
        <dbReference type="ChEBI" id="CHEBI:29105"/>
        <label>2</label>
    </ligand>
</feature>
<feature type="binding site" evidence="1">
    <location>
        <position position="188"/>
    </location>
    <ligand>
        <name>Zn(2+)</name>
        <dbReference type="ChEBI" id="CHEBI:29105"/>
        <label>2</label>
    </ligand>
</feature>
<feature type="binding site" evidence="1">
    <location>
        <position position="199"/>
    </location>
    <ligand>
        <name>Zn(2+)</name>
        <dbReference type="ChEBI" id="CHEBI:29105"/>
        <label>1</label>
    </ligand>
</feature>
<feature type="binding site" evidence="1">
    <location>
        <position position="202"/>
    </location>
    <ligand>
        <name>Zn(2+)</name>
        <dbReference type="ChEBI" id="CHEBI:29105"/>
        <label>1</label>
    </ligand>
</feature>
<organism>
    <name type="scientific">Pseudomonas fluorescens (strain ATCC BAA-477 / NRRL B-23932 / Pf-5)</name>
    <dbReference type="NCBI Taxonomy" id="220664"/>
    <lineage>
        <taxon>Bacteria</taxon>
        <taxon>Pseudomonadati</taxon>
        <taxon>Pseudomonadota</taxon>
        <taxon>Gammaproteobacteria</taxon>
        <taxon>Pseudomonadales</taxon>
        <taxon>Pseudomonadaceae</taxon>
        <taxon>Pseudomonas</taxon>
    </lineage>
</organism>
<dbReference type="EMBL" id="CP000076">
    <property type="protein sequence ID" value="AAY96228.1"/>
    <property type="molecule type" value="Genomic_DNA"/>
</dbReference>
<dbReference type="RefSeq" id="WP_011059189.1">
    <property type="nucleotide sequence ID" value="NC_004129.6"/>
</dbReference>
<dbReference type="SMR" id="Q4KIH0"/>
<dbReference type="STRING" id="220664.PFL_0828"/>
<dbReference type="KEGG" id="pfl:PFL_0828"/>
<dbReference type="PATRIC" id="fig|220664.5.peg.849"/>
<dbReference type="eggNOG" id="COG0484">
    <property type="taxonomic scope" value="Bacteria"/>
</dbReference>
<dbReference type="HOGENOM" id="CLU_017633_0_7_6"/>
<dbReference type="Proteomes" id="UP000008540">
    <property type="component" value="Chromosome"/>
</dbReference>
<dbReference type="GO" id="GO:0005737">
    <property type="term" value="C:cytoplasm"/>
    <property type="evidence" value="ECO:0007669"/>
    <property type="project" value="UniProtKB-SubCell"/>
</dbReference>
<dbReference type="GO" id="GO:0005524">
    <property type="term" value="F:ATP binding"/>
    <property type="evidence" value="ECO:0007669"/>
    <property type="project" value="InterPro"/>
</dbReference>
<dbReference type="GO" id="GO:0031072">
    <property type="term" value="F:heat shock protein binding"/>
    <property type="evidence" value="ECO:0007669"/>
    <property type="project" value="InterPro"/>
</dbReference>
<dbReference type="GO" id="GO:0051082">
    <property type="term" value="F:unfolded protein binding"/>
    <property type="evidence" value="ECO:0007669"/>
    <property type="project" value="UniProtKB-UniRule"/>
</dbReference>
<dbReference type="GO" id="GO:0008270">
    <property type="term" value="F:zinc ion binding"/>
    <property type="evidence" value="ECO:0007669"/>
    <property type="project" value="UniProtKB-UniRule"/>
</dbReference>
<dbReference type="GO" id="GO:0051085">
    <property type="term" value="P:chaperone cofactor-dependent protein refolding"/>
    <property type="evidence" value="ECO:0007669"/>
    <property type="project" value="TreeGrafter"/>
</dbReference>
<dbReference type="GO" id="GO:0006260">
    <property type="term" value="P:DNA replication"/>
    <property type="evidence" value="ECO:0007669"/>
    <property type="project" value="UniProtKB-KW"/>
</dbReference>
<dbReference type="GO" id="GO:0042026">
    <property type="term" value="P:protein refolding"/>
    <property type="evidence" value="ECO:0007669"/>
    <property type="project" value="TreeGrafter"/>
</dbReference>
<dbReference type="GO" id="GO:0009408">
    <property type="term" value="P:response to heat"/>
    <property type="evidence" value="ECO:0007669"/>
    <property type="project" value="InterPro"/>
</dbReference>
<dbReference type="CDD" id="cd06257">
    <property type="entry name" value="DnaJ"/>
    <property type="match status" value="1"/>
</dbReference>
<dbReference type="CDD" id="cd10747">
    <property type="entry name" value="DnaJ_C"/>
    <property type="match status" value="1"/>
</dbReference>
<dbReference type="CDD" id="cd10719">
    <property type="entry name" value="DnaJ_zf"/>
    <property type="match status" value="1"/>
</dbReference>
<dbReference type="FunFam" id="1.10.287.110:FF:000051">
    <property type="entry name" value="Molecular chaperone DnaJ"/>
    <property type="match status" value="1"/>
</dbReference>
<dbReference type="FunFam" id="2.10.230.10:FF:000002">
    <property type="entry name" value="Molecular chaperone DnaJ"/>
    <property type="match status" value="1"/>
</dbReference>
<dbReference type="FunFam" id="2.60.260.20:FF:000004">
    <property type="entry name" value="Molecular chaperone DnaJ"/>
    <property type="match status" value="1"/>
</dbReference>
<dbReference type="Gene3D" id="1.10.287.110">
    <property type="entry name" value="DnaJ domain"/>
    <property type="match status" value="1"/>
</dbReference>
<dbReference type="Gene3D" id="2.10.230.10">
    <property type="entry name" value="Heat shock protein DnaJ, cysteine-rich domain"/>
    <property type="match status" value="1"/>
</dbReference>
<dbReference type="Gene3D" id="2.60.260.20">
    <property type="entry name" value="Urease metallochaperone UreE, N-terminal domain"/>
    <property type="match status" value="2"/>
</dbReference>
<dbReference type="HAMAP" id="MF_01152">
    <property type="entry name" value="DnaJ"/>
    <property type="match status" value="1"/>
</dbReference>
<dbReference type="InterPro" id="IPR012724">
    <property type="entry name" value="DnaJ"/>
</dbReference>
<dbReference type="InterPro" id="IPR002939">
    <property type="entry name" value="DnaJ_C"/>
</dbReference>
<dbReference type="InterPro" id="IPR001623">
    <property type="entry name" value="DnaJ_domain"/>
</dbReference>
<dbReference type="InterPro" id="IPR018253">
    <property type="entry name" value="DnaJ_domain_CS"/>
</dbReference>
<dbReference type="InterPro" id="IPR008971">
    <property type="entry name" value="HSP40/DnaJ_pept-bd"/>
</dbReference>
<dbReference type="InterPro" id="IPR001305">
    <property type="entry name" value="HSP_DnaJ_Cys-rich_dom"/>
</dbReference>
<dbReference type="InterPro" id="IPR036410">
    <property type="entry name" value="HSP_DnaJ_Cys-rich_dom_sf"/>
</dbReference>
<dbReference type="InterPro" id="IPR036869">
    <property type="entry name" value="J_dom_sf"/>
</dbReference>
<dbReference type="NCBIfam" id="TIGR02349">
    <property type="entry name" value="DnaJ_bact"/>
    <property type="match status" value="1"/>
</dbReference>
<dbReference type="NCBIfam" id="NF008035">
    <property type="entry name" value="PRK10767.1"/>
    <property type="match status" value="1"/>
</dbReference>
<dbReference type="PANTHER" id="PTHR43096:SF48">
    <property type="entry name" value="CHAPERONE PROTEIN DNAJ"/>
    <property type="match status" value="1"/>
</dbReference>
<dbReference type="PANTHER" id="PTHR43096">
    <property type="entry name" value="DNAJ HOMOLOG 1, MITOCHONDRIAL-RELATED"/>
    <property type="match status" value="1"/>
</dbReference>
<dbReference type="Pfam" id="PF00226">
    <property type="entry name" value="DnaJ"/>
    <property type="match status" value="1"/>
</dbReference>
<dbReference type="Pfam" id="PF01556">
    <property type="entry name" value="DnaJ_C"/>
    <property type="match status" value="1"/>
</dbReference>
<dbReference type="Pfam" id="PF00684">
    <property type="entry name" value="DnaJ_CXXCXGXG"/>
    <property type="match status" value="1"/>
</dbReference>
<dbReference type="PRINTS" id="PR00625">
    <property type="entry name" value="JDOMAIN"/>
</dbReference>
<dbReference type="SMART" id="SM00271">
    <property type="entry name" value="DnaJ"/>
    <property type="match status" value="1"/>
</dbReference>
<dbReference type="SUPFAM" id="SSF46565">
    <property type="entry name" value="Chaperone J-domain"/>
    <property type="match status" value="1"/>
</dbReference>
<dbReference type="SUPFAM" id="SSF57938">
    <property type="entry name" value="DnaJ/Hsp40 cysteine-rich domain"/>
    <property type="match status" value="1"/>
</dbReference>
<dbReference type="SUPFAM" id="SSF49493">
    <property type="entry name" value="HSP40/DnaJ peptide-binding domain"/>
    <property type="match status" value="2"/>
</dbReference>
<dbReference type="PROSITE" id="PS00636">
    <property type="entry name" value="DNAJ_1"/>
    <property type="match status" value="1"/>
</dbReference>
<dbReference type="PROSITE" id="PS50076">
    <property type="entry name" value="DNAJ_2"/>
    <property type="match status" value="1"/>
</dbReference>
<dbReference type="PROSITE" id="PS51188">
    <property type="entry name" value="ZF_CR"/>
    <property type="match status" value="1"/>
</dbReference>
<keyword id="KW-0143">Chaperone</keyword>
<keyword id="KW-0963">Cytoplasm</keyword>
<keyword id="KW-0235">DNA replication</keyword>
<keyword id="KW-0479">Metal-binding</keyword>
<keyword id="KW-0677">Repeat</keyword>
<keyword id="KW-0346">Stress response</keyword>
<keyword id="KW-0862">Zinc</keyword>
<keyword id="KW-0863">Zinc-finger</keyword>
<evidence type="ECO:0000255" key="1">
    <source>
        <dbReference type="HAMAP-Rule" id="MF_01152"/>
    </source>
</evidence>
<name>DNAJ_PSEF5</name>
<proteinExistence type="inferred from homology"/>
<sequence length="374" mass="40188">MAKRDYYEVLGVERGSSDAELKKAYRRLAMKHHPDRNPGDKASEDMFKEANEAYEVLSDSSKRAAYDQYGHAGVDPSMGGGGGGFGGQNFSDIFGDVFSDFFGGGRGGSRGGAQRGSDLRYTLELNLEEAVRGTTVNIRVPTLVNCKPCDGSGAKKGSSPVTCPTCGGIGQVRMQQGFFSVQQTCPRCHGQGKIISDPCDSCHGEGRVEEYKTLSVKVPAGVDTGDRIRLSGEGEAGTQGGPTGDLYVVINVREHAIFQRDGKHLFCEVPISFVDAALGGELEIPTLDGRVKLKIPEGTQTGKQFRIRGKGVAPVRGGGAGDLMCRVAVETPVNLSRRQRELLEELRGSLDDDNSHSPKTTGWFEGVKRFFGDL</sequence>
<accession>Q4KIH0</accession>
<comment type="function">
    <text evidence="1">Participates actively in the response to hyperosmotic and heat shock by preventing the aggregation of stress-denatured proteins and by disaggregating proteins, also in an autonomous, DnaK-independent fashion. Unfolded proteins bind initially to DnaJ; upon interaction with the DnaJ-bound protein, DnaK hydrolyzes its bound ATP, resulting in the formation of a stable complex. GrpE releases ADP from DnaK; ATP binding to DnaK triggers the release of the substrate protein, thus completing the reaction cycle. Several rounds of ATP-dependent interactions between DnaJ, DnaK and GrpE are required for fully efficient folding. Also involved, together with DnaK and GrpE, in the DNA replication of plasmids through activation of initiation proteins.</text>
</comment>
<comment type="cofactor">
    <cofactor evidence="1">
        <name>Zn(2+)</name>
        <dbReference type="ChEBI" id="CHEBI:29105"/>
    </cofactor>
    <text evidence="1">Binds 2 Zn(2+) ions per monomer.</text>
</comment>
<comment type="subunit">
    <text evidence="1">Homodimer.</text>
</comment>
<comment type="subcellular location">
    <subcellularLocation>
        <location evidence="1">Cytoplasm</location>
    </subcellularLocation>
</comment>
<comment type="domain">
    <text evidence="1">The J domain is necessary and sufficient to stimulate DnaK ATPase activity. Zinc center 1 plays an important role in the autonomous, DnaK-independent chaperone activity of DnaJ. Zinc center 2 is essential for interaction with DnaK and for DnaJ activity.</text>
</comment>
<comment type="similarity">
    <text evidence="1">Belongs to the DnaJ family.</text>
</comment>
<protein>
    <recommendedName>
        <fullName evidence="1">Chaperone protein DnaJ</fullName>
    </recommendedName>
</protein>